<name>OPSB_ASPOR</name>
<dbReference type="EC" id="3.4.23.-"/>
<dbReference type="EMBL" id="AB044078">
    <property type="protein sequence ID" value="BAC00848.1"/>
    <property type="molecule type" value="mRNA"/>
</dbReference>
<dbReference type="EMBL" id="BA000053">
    <property type="protein sequence ID" value="BAE61766.1"/>
    <property type="molecule type" value="Genomic_DNA"/>
</dbReference>
<dbReference type="RefSeq" id="XP_001822899.1">
    <property type="nucleotide sequence ID" value="XM_001822847.2"/>
</dbReference>
<dbReference type="SMR" id="Q8NKB6"/>
<dbReference type="STRING" id="510516.Q8NKB6"/>
<dbReference type="GlyCosmos" id="Q8NKB6">
    <property type="glycosylation" value="7 sites, No reported glycans"/>
</dbReference>
<dbReference type="EnsemblFungi" id="BAE61766">
    <property type="protein sequence ID" value="BAE61766"/>
    <property type="gene ID" value="AO090701000002"/>
</dbReference>
<dbReference type="GeneID" id="5994956"/>
<dbReference type="KEGG" id="aor:AO090701000002"/>
<dbReference type="VEuPathDB" id="FungiDB:AO090701000002"/>
<dbReference type="HOGENOM" id="CLU_013253_9_3_1"/>
<dbReference type="OMA" id="CNVTLGT"/>
<dbReference type="OrthoDB" id="85115at5052"/>
<dbReference type="Proteomes" id="UP000006564">
    <property type="component" value="Chromosome 5"/>
</dbReference>
<dbReference type="GO" id="GO:0005886">
    <property type="term" value="C:plasma membrane"/>
    <property type="evidence" value="ECO:0007669"/>
    <property type="project" value="UniProtKB-SubCell"/>
</dbReference>
<dbReference type="GO" id="GO:0098552">
    <property type="term" value="C:side of membrane"/>
    <property type="evidence" value="ECO:0007669"/>
    <property type="project" value="UniProtKB-KW"/>
</dbReference>
<dbReference type="GO" id="GO:0004190">
    <property type="term" value="F:aspartic-type endopeptidase activity"/>
    <property type="evidence" value="ECO:0007669"/>
    <property type="project" value="UniProtKB-KW"/>
</dbReference>
<dbReference type="GO" id="GO:0006508">
    <property type="term" value="P:proteolysis"/>
    <property type="evidence" value="ECO:0007669"/>
    <property type="project" value="UniProtKB-KW"/>
</dbReference>
<dbReference type="CDD" id="cd05474">
    <property type="entry name" value="SAP_like"/>
    <property type="match status" value="1"/>
</dbReference>
<dbReference type="FunFam" id="2.40.70.10:FF:000011">
    <property type="entry name" value="Aspartic protease"/>
    <property type="match status" value="1"/>
</dbReference>
<dbReference type="FunFam" id="2.40.70.10:FF:000068">
    <property type="entry name" value="Aspartic-type endopeptidase (OpsB)"/>
    <property type="match status" value="1"/>
</dbReference>
<dbReference type="Gene3D" id="2.40.70.10">
    <property type="entry name" value="Acid Proteases"/>
    <property type="match status" value="2"/>
</dbReference>
<dbReference type="InterPro" id="IPR001461">
    <property type="entry name" value="Aspartic_peptidase_A1"/>
</dbReference>
<dbReference type="InterPro" id="IPR001969">
    <property type="entry name" value="Aspartic_peptidase_AS"/>
</dbReference>
<dbReference type="InterPro" id="IPR033121">
    <property type="entry name" value="PEPTIDASE_A1"/>
</dbReference>
<dbReference type="InterPro" id="IPR021109">
    <property type="entry name" value="Peptidase_aspartic_dom_sf"/>
</dbReference>
<dbReference type="InterPro" id="IPR033876">
    <property type="entry name" value="SAP-like"/>
</dbReference>
<dbReference type="PANTHER" id="PTHR47966:SF65">
    <property type="entry name" value="ASPARTIC-TYPE ENDOPEPTIDASE"/>
    <property type="match status" value="1"/>
</dbReference>
<dbReference type="PANTHER" id="PTHR47966">
    <property type="entry name" value="BETA-SITE APP-CLEAVING ENZYME, ISOFORM A-RELATED"/>
    <property type="match status" value="1"/>
</dbReference>
<dbReference type="Pfam" id="PF00026">
    <property type="entry name" value="Asp"/>
    <property type="match status" value="1"/>
</dbReference>
<dbReference type="PRINTS" id="PR00792">
    <property type="entry name" value="PEPSIN"/>
</dbReference>
<dbReference type="SUPFAM" id="SSF50630">
    <property type="entry name" value="Acid proteases"/>
    <property type="match status" value="1"/>
</dbReference>
<dbReference type="PROSITE" id="PS00141">
    <property type="entry name" value="ASP_PROTEASE"/>
    <property type="match status" value="1"/>
</dbReference>
<dbReference type="PROSITE" id="PS51767">
    <property type="entry name" value="PEPTIDASE_A1"/>
    <property type="match status" value="1"/>
</dbReference>
<protein>
    <recommendedName>
        <fullName>Probable aspartic-type endopeptidase opsB</fullName>
        <ecNumber>3.4.23.-</ecNumber>
    </recommendedName>
    <alternativeName>
        <fullName>Oryzapsin B</fullName>
    </alternativeName>
</protein>
<proteinExistence type="evidence at transcript level"/>
<comment type="function">
    <text evidence="1">Probable GPI-anchored aspartic-type endopeptidase.</text>
</comment>
<comment type="subcellular location">
    <subcellularLocation>
        <location evidence="5">Cell membrane</location>
        <topology evidence="5">Lipid-anchor</topology>
        <topology evidence="5">GPI-anchor</topology>
    </subcellularLocation>
</comment>
<comment type="similarity">
    <text evidence="5">Belongs to the peptidase A1 family.</text>
</comment>
<evidence type="ECO:0000250" key="1"/>
<evidence type="ECO:0000255" key="2"/>
<evidence type="ECO:0000255" key="3">
    <source>
        <dbReference type="PROSITE-ProRule" id="PRU01103"/>
    </source>
</evidence>
<evidence type="ECO:0000255" key="4">
    <source>
        <dbReference type="PROSITE-ProRule" id="PRU10094"/>
    </source>
</evidence>
<evidence type="ECO:0000305" key="5"/>
<reference key="1">
    <citation type="journal article" date="2002" name="Gene">
        <title>A polymerase chain reaction-based method for cloning novel members of a gene family using a combination of degenerate and inhibitory primers.</title>
        <authorList>
            <person name="Kunihiro S."/>
            <person name="Kawanishi Y."/>
            <person name="Sano M."/>
            <person name="Naito K."/>
            <person name="Matsuura Y."/>
            <person name="Tateno Y."/>
            <person name="Gojobori T."/>
            <person name="Yamagata Y."/>
            <person name="Abe K."/>
            <person name="Machida M."/>
        </authorList>
    </citation>
    <scope>NUCLEOTIDE SEQUENCE [MRNA]</scope>
    <source>
        <strain>ATCC 42149 / RIB 40</strain>
    </source>
</reference>
<reference key="2">
    <citation type="journal article" date="2005" name="Nature">
        <title>Genome sequencing and analysis of Aspergillus oryzae.</title>
        <authorList>
            <person name="Machida M."/>
            <person name="Asai K."/>
            <person name="Sano M."/>
            <person name="Tanaka T."/>
            <person name="Kumagai T."/>
            <person name="Terai G."/>
            <person name="Kusumoto K."/>
            <person name="Arima T."/>
            <person name="Akita O."/>
            <person name="Kashiwagi Y."/>
            <person name="Abe K."/>
            <person name="Gomi K."/>
            <person name="Horiuchi H."/>
            <person name="Kitamoto K."/>
            <person name="Kobayashi T."/>
            <person name="Takeuchi M."/>
            <person name="Denning D.W."/>
            <person name="Galagan J.E."/>
            <person name="Nierman W.C."/>
            <person name="Yu J."/>
            <person name="Archer D.B."/>
            <person name="Bennett J.W."/>
            <person name="Bhatnagar D."/>
            <person name="Cleveland T.E."/>
            <person name="Fedorova N.D."/>
            <person name="Gotoh O."/>
            <person name="Horikawa H."/>
            <person name="Hosoyama A."/>
            <person name="Ichinomiya M."/>
            <person name="Igarashi R."/>
            <person name="Iwashita K."/>
            <person name="Juvvadi P.R."/>
            <person name="Kato M."/>
            <person name="Kato Y."/>
            <person name="Kin T."/>
            <person name="Kokubun A."/>
            <person name="Maeda H."/>
            <person name="Maeyama N."/>
            <person name="Maruyama J."/>
            <person name="Nagasaki H."/>
            <person name="Nakajima T."/>
            <person name="Oda K."/>
            <person name="Okada K."/>
            <person name="Paulsen I."/>
            <person name="Sakamoto K."/>
            <person name="Sawano T."/>
            <person name="Takahashi M."/>
            <person name="Takase K."/>
            <person name="Terabayashi Y."/>
            <person name="Wortman J.R."/>
            <person name="Yamada O."/>
            <person name="Yamagata Y."/>
            <person name="Anazawa H."/>
            <person name="Hata Y."/>
            <person name="Koide Y."/>
            <person name="Komori T."/>
            <person name="Koyama Y."/>
            <person name="Minetoki T."/>
            <person name="Suharnan S."/>
            <person name="Tanaka A."/>
            <person name="Isono K."/>
            <person name="Kuhara S."/>
            <person name="Ogasawara N."/>
            <person name="Kikuchi H."/>
        </authorList>
    </citation>
    <scope>NUCLEOTIDE SEQUENCE [LARGE SCALE GENOMIC DNA]</scope>
    <source>
        <strain>ATCC 42149 / RIB 40</strain>
    </source>
</reference>
<organism>
    <name type="scientific">Aspergillus oryzae (strain ATCC 42149 / RIB 40)</name>
    <name type="common">Yellow koji mold</name>
    <dbReference type="NCBI Taxonomy" id="510516"/>
    <lineage>
        <taxon>Eukaryota</taxon>
        <taxon>Fungi</taxon>
        <taxon>Dikarya</taxon>
        <taxon>Ascomycota</taxon>
        <taxon>Pezizomycotina</taxon>
        <taxon>Eurotiomycetes</taxon>
        <taxon>Eurotiomycetidae</taxon>
        <taxon>Eurotiales</taxon>
        <taxon>Aspergillaceae</taxon>
        <taxon>Aspergillus</taxon>
        <taxon>Aspergillus subgen. Circumdati</taxon>
    </lineage>
</organism>
<sequence length="487" mass="51029">MQKSWLVLLVACLGLQGTTALTLHRRDLPAVVSLDIKRNNAVDPVARDRMRRKRDKTVEQNLDNEETLYFCNITLGTPKQSLRLVLDTGSSDLWCNAANSTLCSSRDQPCNASGSYDPSSSSSYAYTSSDFNISYADGTGAAGDYVTDTIHIGGATVKDFQFGVGYSSSSAEGVLGIGYTTNEVQVGRLGKSAYANLPQAMVKNGLIQSNAYSLWLNDLGADTGSILFGGVNTEKYHGELQTLPIQTVNGVYSEFIIALTGVSLSSASSHHNYSSSDALPAAVLLDSGSSLTYLPNSIVQDIYDDLGVTYESSSGVGYVPCSLAQQNINVTYTFSSPIITVGIDELVLDAGDLRFRNGARACIFGIVPAGDSTAVLGDTFLRSAYVVYDLSNNEISLANTKFNSTKDNILEIGTGDDSVPGATQVSNPVTSVVADGSGARIGGPTGEIFTDIPSATSSGGAAAPAGPTDVPKHLVLGAAAIGYVLAF</sequence>
<accession>Q8NKB6</accession>
<feature type="signal peptide" evidence="2">
    <location>
        <begin position="1"/>
        <end position="20"/>
    </location>
</feature>
<feature type="chain" id="PRO_0000397706" description="Probable aspartic-type endopeptidase opsB">
    <location>
        <begin position="21"/>
        <end position="463"/>
    </location>
</feature>
<feature type="propeptide" id="PRO_0000397707" description="Removed in mature form" evidence="2">
    <location>
        <begin position="464"/>
        <end position="487"/>
    </location>
</feature>
<feature type="domain" description="Peptidase A1" evidence="3">
    <location>
        <begin position="69"/>
        <end position="398"/>
    </location>
</feature>
<feature type="active site" evidence="4">
    <location>
        <position position="87"/>
    </location>
</feature>
<feature type="active site" evidence="4">
    <location>
        <position position="286"/>
    </location>
</feature>
<feature type="lipid moiety-binding region" description="GPI-anchor amidated alanine" evidence="2">
    <location>
        <position position="463"/>
    </location>
</feature>
<feature type="glycosylation site" description="N-linked (GlcNAc...) asparagine" evidence="2">
    <location>
        <position position="72"/>
    </location>
</feature>
<feature type="glycosylation site" description="N-linked (GlcNAc...) asparagine" evidence="2">
    <location>
        <position position="99"/>
    </location>
</feature>
<feature type="glycosylation site" description="N-linked (GlcNAc...) asparagine" evidence="2">
    <location>
        <position position="111"/>
    </location>
</feature>
<feature type="glycosylation site" description="N-linked (GlcNAc...) asparagine" evidence="2">
    <location>
        <position position="132"/>
    </location>
</feature>
<feature type="glycosylation site" description="N-linked (GlcNAc...) asparagine" evidence="2">
    <location>
        <position position="272"/>
    </location>
</feature>
<feature type="glycosylation site" description="N-linked (GlcNAc...) asparagine" evidence="2">
    <location>
        <position position="329"/>
    </location>
</feature>
<feature type="glycosylation site" description="N-linked (GlcNAc...) asparagine" evidence="2">
    <location>
        <position position="403"/>
    </location>
</feature>
<gene>
    <name type="primary">opsB</name>
    <name type="ORF">AO090701000002</name>
</gene>
<keyword id="KW-0064">Aspartyl protease</keyword>
<keyword id="KW-1003">Cell membrane</keyword>
<keyword id="KW-0325">Glycoprotein</keyword>
<keyword id="KW-0336">GPI-anchor</keyword>
<keyword id="KW-0378">Hydrolase</keyword>
<keyword id="KW-0449">Lipoprotein</keyword>
<keyword id="KW-0472">Membrane</keyword>
<keyword id="KW-0645">Protease</keyword>
<keyword id="KW-1185">Reference proteome</keyword>
<keyword id="KW-0732">Signal</keyword>
<keyword id="KW-0865">Zymogen</keyword>